<accession>A8Z4A9</accession>
<sequence length="155" mass="17952">MFTIDFSDHTGLVKDAWYKQIEDLLEFAKKEEHIEDDAELSVTFVDKQEIQEINRTYRDKDKVTDVISFALEEDEPEIDFSGLDIPRVLGDIIICTDVAQEQANNYGHSFERELGFLALHGFLHLLGYDHMTEADEKEMFGRQDTILNAYGLTRD</sequence>
<dbReference type="EC" id="3.1.-.-" evidence="1"/>
<dbReference type="EMBL" id="CP000730">
    <property type="protein sequence ID" value="ABX29578.1"/>
    <property type="molecule type" value="Genomic_DNA"/>
</dbReference>
<dbReference type="RefSeq" id="WP_000494134.1">
    <property type="nucleotide sequence ID" value="NC_010079.1"/>
</dbReference>
<dbReference type="SMR" id="A8Z4A9"/>
<dbReference type="KEGG" id="sax:USA300HOU_1571"/>
<dbReference type="HOGENOM" id="CLU_106710_3_0_9"/>
<dbReference type="GO" id="GO:0005737">
    <property type="term" value="C:cytoplasm"/>
    <property type="evidence" value="ECO:0007669"/>
    <property type="project" value="UniProtKB-SubCell"/>
</dbReference>
<dbReference type="GO" id="GO:0004222">
    <property type="term" value="F:metalloendopeptidase activity"/>
    <property type="evidence" value="ECO:0007669"/>
    <property type="project" value="InterPro"/>
</dbReference>
<dbReference type="GO" id="GO:0004521">
    <property type="term" value="F:RNA endonuclease activity"/>
    <property type="evidence" value="ECO:0007669"/>
    <property type="project" value="UniProtKB-UniRule"/>
</dbReference>
<dbReference type="GO" id="GO:0008270">
    <property type="term" value="F:zinc ion binding"/>
    <property type="evidence" value="ECO:0007669"/>
    <property type="project" value="UniProtKB-UniRule"/>
</dbReference>
<dbReference type="GO" id="GO:0006364">
    <property type="term" value="P:rRNA processing"/>
    <property type="evidence" value="ECO:0007669"/>
    <property type="project" value="UniProtKB-UniRule"/>
</dbReference>
<dbReference type="Gene3D" id="3.40.390.30">
    <property type="entry name" value="Metalloproteases ('zincins'), catalytic domain"/>
    <property type="match status" value="1"/>
</dbReference>
<dbReference type="HAMAP" id="MF_00009">
    <property type="entry name" value="Endoribonucl_YbeY"/>
    <property type="match status" value="1"/>
</dbReference>
<dbReference type="InterPro" id="IPR023091">
    <property type="entry name" value="MetalPrtase_cat_dom_sf_prd"/>
</dbReference>
<dbReference type="InterPro" id="IPR002036">
    <property type="entry name" value="YbeY"/>
</dbReference>
<dbReference type="InterPro" id="IPR020549">
    <property type="entry name" value="YbeY_CS"/>
</dbReference>
<dbReference type="NCBIfam" id="TIGR00043">
    <property type="entry name" value="rRNA maturation RNase YbeY"/>
    <property type="match status" value="1"/>
</dbReference>
<dbReference type="PANTHER" id="PTHR46986">
    <property type="entry name" value="ENDORIBONUCLEASE YBEY, CHLOROPLASTIC"/>
    <property type="match status" value="1"/>
</dbReference>
<dbReference type="PANTHER" id="PTHR46986:SF1">
    <property type="entry name" value="ENDORIBONUCLEASE YBEY, CHLOROPLASTIC"/>
    <property type="match status" value="1"/>
</dbReference>
<dbReference type="Pfam" id="PF02130">
    <property type="entry name" value="YbeY"/>
    <property type="match status" value="1"/>
</dbReference>
<dbReference type="SUPFAM" id="SSF55486">
    <property type="entry name" value="Metalloproteases ('zincins'), catalytic domain"/>
    <property type="match status" value="1"/>
</dbReference>
<dbReference type="PROSITE" id="PS01306">
    <property type="entry name" value="UPF0054"/>
    <property type="match status" value="1"/>
</dbReference>
<protein>
    <recommendedName>
        <fullName evidence="1">Endoribonuclease YbeY</fullName>
        <ecNumber evidence="1">3.1.-.-</ecNumber>
    </recommendedName>
</protein>
<name>YBEY_STAAT</name>
<gene>
    <name evidence="1" type="primary">ybeY</name>
    <name type="ordered locus">USA300HOU_1571</name>
</gene>
<reference key="1">
    <citation type="journal article" date="2007" name="BMC Microbiol.">
        <title>Subtle genetic changes enhance virulence of methicillin resistant and sensitive Staphylococcus aureus.</title>
        <authorList>
            <person name="Highlander S.K."/>
            <person name="Hulten K.G."/>
            <person name="Qin X."/>
            <person name="Jiang H."/>
            <person name="Yerrapragada S."/>
            <person name="Mason E.O. Jr."/>
            <person name="Shang Y."/>
            <person name="Williams T.M."/>
            <person name="Fortunov R.M."/>
            <person name="Liu Y."/>
            <person name="Igboeli O."/>
            <person name="Petrosino J."/>
            <person name="Tirumalai M."/>
            <person name="Uzman A."/>
            <person name="Fox G.E."/>
            <person name="Cardenas A.M."/>
            <person name="Muzny D.M."/>
            <person name="Hemphill L."/>
            <person name="Ding Y."/>
            <person name="Dugan S."/>
            <person name="Blyth P.R."/>
            <person name="Buhay C.J."/>
            <person name="Dinh H.H."/>
            <person name="Hawes A.C."/>
            <person name="Holder M."/>
            <person name="Kovar C.L."/>
            <person name="Lee S.L."/>
            <person name="Liu W."/>
            <person name="Nazareth L.V."/>
            <person name="Wang Q."/>
            <person name="Zhou J."/>
            <person name="Kaplan S.L."/>
            <person name="Weinstock G.M."/>
        </authorList>
    </citation>
    <scope>NUCLEOTIDE SEQUENCE [LARGE SCALE GENOMIC DNA]</scope>
    <source>
        <strain>USA300 / TCH1516</strain>
    </source>
</reference>
<comment type="function">
    <text evidence="1">Single strand-specific metallo-endoribonuclease involved in late-stage 70S ribosome quality control and in maturation of the 3' terminus of the 16S rRNA.</text>
</comment>
<comment type="cofactor">
    <cofactor evidence="1">
        <name>Zn(2+)</name>
        <dbReference type="ChEBI" id="CHEBI:29105"/>
    </cofactor>
    <text evidence="1">Binds 1 zinc ion.</text>
</comment>
<comment type="subcellular location">
    <subcellularLocation>
        <location evidence="1">Cytoplasm</location>
    </subcellularLocation>
</comment>
<comment type="similarity">
    <text evidence="1">Belongs to the endoribonuclease YbeY family.</text>
</comment>
<organism>
    <name type="scientific">Staphylococcus aureus (strain USA300 / TCH1516)</name>
    <dbReference type="NCBI Taxonomy" id="451516"/>
    <lineage>
        <taxon>Bacteria</taxon>
        <taxon>Bacillati</taxon>
        <taxon>Bacillota</taxon>
        <taxon>Bacilli</taxon>
        <taxon>Bacillales</taxon>
        <taxon>Staphylococcaceae</taxon>
        <taxon>Staphylococcus</taxon>
    </lineage>
</organism>
<feature type="chain" id="PRO_1000073922" description="Endoribonuclease YbeY">
    <location>
        <begin position="1"/>
        <end position="155"/>
    </location>
</feature>
<feature type="binding site" evidence="1">
    <location>
        <position position="120"/>
    </location>
    <ligand>
        <name>Zn(2+)</name>
        <dbReference type="ChEBI" id="CHEBI:29105"/>
        <note>catalytic</note>
    </ligand>
</feature>
<feature type="binding site" evidence="1">
    <location>
        <position position="124"/>
    </location>
    <ligand>
        <name>Zn(2+)</name>
        <dbReference type="ChEBI" id="CHEBI:29105"/>
        <note>catalytic</note>
    </ligand>
</feature>
<feature type="binding site" evidence="1">
    <location>
        <position position="130"/>
    </location>
    <ligand>
        <name>Zn(2+)</name>
        <dbReference type="ChEBI" id="CHEBI:29105"/>
        <note>catalytic</note>
    </ligand>
</feature>
<keyword id="KW-0963">Cytoplasm</keyword>
<keyword id="KW-0255">Endonuclease</keyword>
<keyword id="KW-0378">Hydrolase</keyword>
<keyword id="KW-0479">Metal-binding</keyword>
<keyword id="KW-0540">Nuclease</keyword>
<keyword id="KW-0690">Ribosome biogenesis</keyword>
<keyword id="KW-0698">rRNA processing</keyword>
<keyword id="KW-0862">Zinc</keyword>
<proteinExistence type="inferred from homology"/>
<evidence type="ECO:0000255" key="1">
    <source>
        <dbReference type="HAMAP-Rule" id="MF_00009"/>
    </source>
</evidence>